<dbReference type="EC" id="2.7.7.6" evidence="1"/>
<dbReference type="EMBL" id="CP001150">
    <property type="protein sequence ID" value="ACL99865.1"/>
    <property type="molecule type" value="Genomic_DNA"/>
</dbReference>
<dbReference type="RefSeq" id="WP_002722478.1">
    <property type="nucleotide sequence ID" value="NC_011963.1"/>
</dbReference>
<dbReference type="SMR" id="B9KL83"/>
<dbReference type="GeneID" id="67445492"/>
<dbReference type="KEGG" id="rsk:RSKD131_0006"/>
<dbReference type="HOGENOM" id="CLU_000524_4_0_5"/>
<dbReference type="GO" id="GO:0000428">
    <property type="term" value="C:DNA-directed RNA polymerase complex"/>
    <property type="evidence" value="ECO:0007669"/>
    <property type="project" value="UniProtKB-KW"/>
</dbReference>
<dbReference type="GO" id="GO:0003677">
    <property type="term" value="F:DNA binding"/>
    <property type="evidence" value="ECO:0007669"/>
    <property type="project" value="UniProtKB-UniRule"/>
</dbReference>
<dbReference type="GO" id="GO:0003899">
    <property type="term" value="F:DNA-directed RNA polymerase activity"/>
    <property type="evidence" value="ECO:0007669"/>
    <property type="project" value="UniProtKB-UniRule"/>
</dbReference>
<dbReference type="GO" id="GO:0032549">
    <property type="term" value="F:ribonucleoside binding"/>
    <property type="evidence" value="ECO:0007669"/>
    <property type="project" value="InterPro"/>
</dbReference>
<dbReference type="GO" id="GO:0006351">
    <property type="term" value="P:DNA-templated transcription"/>
    <property type="evidence" value="ECO:0007669"/>
    <property type="project" value="UniProtKB-UniRule"/>
</dbReference>
<dbReference type="CDD" id="cd00653">
    <property type="entry name" value="RNA_pol_B_RPB2"/>
    <property type="match status" value="1"/>
</dbReference>
<dbReference type="FunFam" id="3.90.1800.10:FF:000001">
    <property type="entry name" value="DNA-directed RNA polymerase subunit beta"/>
    <property type="match status" value="1"/>
</dbReference>
<dbReference type="Gene3D" id="2.40.50.100">
    <property type="match status" value="1"/>
</dbReference>
<dbReference type="Gene3D" id="2.40.50.150">
    <property type="match status" value="1"/>
</dbReference>
<dbReference type="Gene3D" id="3.90.1100.10">
    <property type="match status" value="2"/>
</dbReference>
<dbReference type="Gene3D" id="2.30.150.10">
    <property type="entry name" value="DNA-directed RNA polymerase, beta subunit, external 1 domain"/>
    <property type="match status" value="1"/>
</dbReference>
<dbReference type="Gene3D" id="2.40.270.10">
    <property type="entry name" value="DNA-directed RNA polymerase, subunit 2, domain 6"/>
    <property type="match status" value="1"/>
</dbReference>
<dbReference type="Gene3D" id="3.90.1800.10">
    <property type="entry name" value="RNA polymerase alpha subunit dimerisation domain"/>
    <property type="match status" value="1"/>
</dbReference>
<dbReference type="Gene3D" id="3.90.1110.10">
    <property type="entry name" value="RNA polymerase Rpb2, domain 2"/>
    <property type="match status" value="1"/>
</dbReference>
<dbReference type="HAMAP" id="MF_01321">
    <property type="entry name" value="RNApol_bact_RpoB"/>
    <property type="match status" value="1"/>
</dbReference>
<dbReference type="InterPro" id="IPR042107">
    <property type="entry name" value="DNA-dir_RNA_pol_bsu_ext_1_sf"/>
</dbReference>
<dbReference type="InterPro" id="IPR019462">
    <property type="entry name" value="DNA-dir_RNA_pol_bsu_external_1"/>
</dbReference>
<dbReference type="InterPro" id="IPR015712">
    <property type="entry name" value="DNA-dir_RNA_pol_su2"/>
</dbReference>
<dbReference type="InterPro" id="IPR007120">
    <property type="entry name" value="DNA-dir_RNAP_su2_dom"/>
</dbReference>
<dbReference type="InterPro" id="IPR037033">
    <property type="entry name" value="DNA-dir_RNAP_su2_hyb_sf"/>
</dbReference>
<dbReference type="InterPro" id="IPR010243">
    <property type="entry name" value="RNA_pol_bsu_bac"/>
</dbReference>
<dbReference type="InterPro" id="IPR007121">
    <property type="entry name" value="RNA_pol_bsu_CS"/>
</dbReference>
<dbReference type="InterPro" id="IPR007644">
    <property type="entry name" value="RNA_pol_bsu_protrusion"/>
</dbReference>
<dbReference type="InterPro" id="IPR007642">
    <property type="entry name" value="RNA_pol_Rpb2_2"/>
</dbReference>
<dbReference type="InterPro" id="IPR037034">
    <property type="entry name" value="RNA_pol_Rpb2_2_sf"/>
</dbReference>
<dbReference type="InterPro" id="IPR007645">
    <property type="entry name" value="RNA_pol_Rpb2_3"/>
</dbReference>
<dbReference type="InterPro" id="IPR007641">
    <property type="entry name" value="RNA_pol_Rpb2_7"/>
</dbReference>
<dbReference type="InterPro" id="IPR014724">
    <property type="entry name" value="RNA_pol_RPB2_OB-fold"/>
</dbReference>
<dbReference type="NCBIfam" id="NF001616">
    <property type="entry name" value="PRK00405.1"/>
    <property type="match status" value="1"/>
</dbReference>
<dbReference type="NCBIfam" id="TIGR02013">
    <property type="entry name" value="rpoB"/>
    <property type="match status" value="1"/>
</dbReference>
<dbReference type="PANTHER" id="PTHR20856">
    <property type="entry name" value="DNA-DIRECTED RNA POLYMERASE I SUBUNIT 2"/>
    <property type="match status" value="1"/>
</dbReference>
<dbReference type="Pfam" id="PF04563">
    <property type="entry name" value="RNA_pol_Rpb2_1"/>
    <property type="match status" value="1"/>
</dbReference>
<dbReference type="Pfam" id="PF04561">
    <property type="entry name" value="RNA_pol_Rpb2_2"/>
    <property type="match status" value="2"/>
</dbReference>
<dbReference type="Pfam" id="PF04565">
    <property type="entry name" value="RNA_pol_Rpb2_3"/>
    <property type="match status" value="1"/>
</dbReference>
<dbReference type="Pfam" id="PF10385">
    <property type="entry name" value="RNA_pol_Rpb2_45"/>
    <property type="match status" value="1"/>
</dbReference>
<dbReference type="Pfam" id="PF00562">
    <property type="entry name" value="RNA_pol_Rpb2_6"/>
    <property type="match status" value="1"/>
</dbReference>
<dbReference type="Pfam" id="PF04560">
    <property type="entry name" value="RNA_pol_Rpb2_7"/>
    <property type="match status" value="1"/>
</dbReference>
<dbReference type="SUPFAM" id="SSF64484">
    <property type="entry name" value="beta and beta-prime subunits of DNA dependent RNA-polymerase"/>
    <property type="match status" value="1"/>
</dbReference>
<dbReference type="PROSITE" id="PS01166">
    <property type="entry name" value="RNA_POL_BETA"/>
    <property type="match status" value="1"/>
</dbReference>
<organism>
    <name type="scientific">Cereibacter sphaeroides (strain KD131 / KCTC 12085)</name>
    <name type="common">Rhodobacter sphaeroides</name>
    <dbReference type="NCBI Taxonomy" id="557760"/>
    <lineage>
        <taxon>Bacteria</taxon>
        <taxon>Pseudomonadati</taxon>
        <taxon>Pseudomonadota</taxon>
        <taxon>Alphaproteobacteria</taxon>
        <taxon>Rhodobacterales</taxon>
        <taxon>Paracoccaceae</taxon>
        <taxon>Cereibacter</taxon>
    </lineage>
</organism>
<keyword id="KW-0240">DNA-directed RNA polymerase</keyword>
<keyword id="KW-0548">Nucleotidyltransferase</keyword>
<keyword id="KW-0804">Transcription</keyword>
<keyword id="KW-0808">Transferase</keyword>
<proteinExistence type="inferred from homology"/>
<feature type="chain" id="PRO_1000165818" description="DNA-directed RNA polymerase subunit beta">
    <location>
        <begin position="1"/>
        <end position="1377"/>
    </location>
</feature>
<protein>
    <recommendedName>
        <fullName evidence="1">DNA-directed RNA polymerase subunit beta</fullName>
        <shortName evidence="1">RNAP subunit beta</shortName>
        <ecNumber evidence="1">2.7.7.6</ecNumber>
    </recommendedName>
    <alternativeName>
        <fullName evidence="1">RNA polymerase subunit beta</fullName>
    </alternativeName>
    <alternativeName>
        <fullName evidence="1">Transcriptase subunit beta</fullName>
    </alternativeName>
</protein>
<gene>
    <name evidence="1" type="primary">rpoB</name>
    <name type="ordered locus">RSKD131_0006</name>
</gene>
<reference key="1">
    <citation type="journal article" date="2009" name="J. Bacteriol.">
        <title>Complete genome sequence of Rhodobacter sphaeroides KD131.</title>
        <authorList>
            <person name="Lim S.-K."/>
            <person name="Kim S.J."/>
            <person name="Cha S.H."/>
            <person name="Oh Y.-K."/>
            <person name="Rhee H.-J."/>
            <person name="Kim M.-S."/>
            <person name="Lee J.K."/>
        </authorList>
    </citation>
    <scope>NUCLEOTIDE SEQUENCE [LARGE SCALE GENOMIC DNA]</scope>
    <source>
        <strain>KD131 / KCTC 12085</strain>
    </source>
</reference>
<comment type="function">
    <text evidence="1">DNA-dependent RNA polymerase catalyzes the transcription of DNA into RNA using the four ribonucleoside triphosphates as substrates.</text>
</comment>
<comment type="catalytic activity">
    <reaction evidence="1">
        <text>RNA(n) + a ribonucleoside 5'-triphosphate = RNA(n+1) + diphosphate</text>
        <dbReference type="Rhea" id="RHEA:21248"/>
        <dbReference type="Rhea" id="RHEA-COMP:14527"/>
        <dbReference type="Rhea" id="RHEA-COMP:17342"/>
        <dbReference type="ChEBI" id="CHEBI:33019"/>
        <dbReference type="ChEBI" id="CHEBI:61557"/>
        <dbReference type="ChEBI" id="CHEBI:140395"/>
        <dbReference type="EC" id="2.7.7.6"/>
    </reaction>
</comment>
<comment type="subunit">
    <text evidence="1">The RNAP catalytic core consists of 2 alpha, 1 beta, 1 beta' and 1 omega subunit. When a sigma factor is associated with the core the holoenzyme is formed, which can initiate transcription.</text>
</comment>
<comment type="similarity">
    <text evidence="1">Belongs to the RNA polymerase beta chain family.</text>
</comment>
<evidence type="ECO:0000255" key="1">
    <source>
        <dbReference type="HAMAP-Rule" id="MF_01321"/>
    </source>
</evidence>
<sequence>MAQSYVGQKRIRRYYGKIREVLEMPNLIEVQKSSYDLFLKSGDGPKAADGEGIQGVFQSVFPIKDFNETAVLEFVKYELEKPKYDVDECQQRDMTYAAPLKVTLRLIVFDVDETTGARSVKDIKEQDVYMGDMPLMTANGTFIVNGTERVIVSQMHRSPGVFFDHDKGKTHSSGKLLFACRIIPYRGSWLDFEFDAKDIVFARIDRRRKLPVTTLLYALGMDQEGIMDAYYETVNFKHQKNRGWVTRFFPERVRGTRPTYDLVDAATGEVILKAGEKATPRMVKKWIDEAQITELLVPFDHIVGRYVAQDIINEETGEIWVEAGDELTMEYDRDGEVKGGTLKLLLDQGITDIPVLDIDNVNVGPYIRNTMAADKNMGRDTALMDIYRVMRPGEPPTVEAASNLFDTLFFDSERYDLSAVGRVKMNMRLDLGKPDTQRTLDRDDIIACIKALTELRDGKGEIDDIDHLGNRRVRSVGELMENQYRVGLLRMERAIKERMSSVEIDTIMPQDLINAKPAAAAVREFFGSSQLSQFMDQTNPLSEVTHKRRLSALGPGGLTRERAGFEVRDVHPTHYGRMCPIETPEGQNIGLINSLATFARVNKYGFIETPYRKVVEGAVTDDVVYMSATEEMRHTVAQANAQLDEEGRFVSDLISSRKAGEFMLNPPDAIDLIDVSPKQLVSVAASLIPFLENDDANRALMGSNMQRQAVPLLQSDAPFVGTGIEAVVARDSGAAIMARRAGVIDQVDATRIVVRATEMLEPGEPGVDIYRLRKFKRSNQSSCINQRPLVKVGDVVHRGEVVADGPCTDMGELALGRNVIVAFMPWNGYNYEDSILISERILRDDVYTSIHIEEYEVAARDTKLGPEEITRDIPNVGEEALRNLDEAGIVYIGAEVQPGDILVGKITPKGESPMTPEEKLLRAIFGEKASDVRDTSLRLPPGAYGTIVEVRVFNRHGVDKDERALQIEREEVERLARDRDDELAILERNIYSRLRTLIMGKTAVKGPKGIRAGSEINEDLLSTLSRGQWWQLALGEEADAKEVEALHEQFEAQKRALDHRFEDKVEKVRRGDDLPPGVMKMVKVFVAVKRKLQPGDKMAGRHGNKGVISKVVPIEDMPFLADGTHVDLVLNPLGVPSRMNVGQILETHMGWAARGLGIKIDEALQDYRRSGDLTPVKEAMRLAYGDETYEGAFGDREDEDLVEMAGRVTKGVPIATPVFDGAKEPDVNDALRRAGFDQSGQSIVFDGRTGEQFARPVTVGVKYMLKLHHLVDDKLHARSTGPYSLVTQQPLGGKAQFGGQRLGEMEVWALEAYGAAYTLQEMLTVKSDDVAGRTKMYESIVKGEDNFEAGVPESFNVLVKEVRGLGLNMELLDADEE</sequence>
<name>RPOB_CERSK</name>
<accession>B9KL83</accession>